<evidence type="ECO:0000250" key="1">
    <source>
        <dbReference type="UniProtKB" id="P0AE85"/>
    </source>
</evidence>
<evidence type="ECO:0000255" key="2"/>
<evidence type="ECO:0000305" key="3"/>
<sequence>MRIVTAAVMASTLAVSSLSHAAEVGSGDNWHPGEELTQRSTQSHMFDGISLTEHQRQQMRDLMQQARHEQPPVNVSELETMHRLVTAENFDENAVRAQAEKMANEQIARQVEMAKVRNQMYRLLTPEQQAVLNEKHQQRMEQLRDVTQWQKSSSLKLLSSSNSRSQ</sequence>
<proteinExistence type="inferred from homology"/>
<feature type="signal peptide" evidence="2">
    <location>
        <begin position="1"/>
        <end position="21"/>
    </location>
</feature>
<feature type="chain" id="PRO_0000043381" description="Periplasmic protein CpxP">
    <location>
        <begin position="22"/>
        <end position="166"/>
    </location>
</feature>
<gene>
    <name type="primary">cpxP</name>
    <name type="ordered locus">c4865</name>
</gene>
<dbReference type="EMBL" id="AE014075">
    <property type="protein sequence ID" value="AAN83293.1"/>
    <property type="status" value="ALT_INIT"/>
    <property type="molecule type" value="Genomic_DNA"/>
</dbReference>
<dbReference type="RefSeq" id="WP_001223800.1">
    <property type="nucleotide sequence ID" value="NZ_CP051263.1"/>
</dbReference>
<dbReference type="SMR" id="P0AE86"/>
<dbReference type="STRING" id="199310.c4865"/>
<dbReference type="GeneID" id="93778025"/>
<dbReference type="KEGG" id="ecc:c4865"/>
<dbReference type="eggNOG" id="COG3678">
    <property type="taxonomic scope" value="Bacteria"/>
</dbReference>
<dbReference type="HOGENOM" id="CLU_124352_2_1_6"/>
<dbReference type="Proteomes" id="UP000001410">
    <property type="component" value="Chromosome"/>
</dbReference>
<dbReference type="GO" id="GO:0030288">
    <property type="term" value="C:outer membrane-bounded periplasmic space"/>
    <property type="evidence" value="ECO:0007669"/>
    <property type="project" value="TreeGrafter"/>
</dbReference>
<dbReference type="GO" id="GO:0051082">
    <property type="term" value="F:unfolded protein binding"/>
    <property type="evidence" value="ECO:0007669"/>
    <property type="project" value="TreeGrafter"/>
</dbReference>
<dbReference type="CDD" id="cd09916">
    <property type="entry name" value="CpxP_like"/>
    <property type="match status" value="1"/>
</dbReference>
<dbReference type="FunFam" id="1.20.120.1490:FF:000001">
    <property type="entry name" value="Cell-envelope stress modulator CpxP"/>
    <property type="match status" value="1"/>
</dbReference>
<dbReference type="Gene3D" id="1.20.120.1490">
    <property type="match status" value="1"/>
</dbReference>
<dbReference type="InterPro" id="IPR052211">
    <property type="entry name" value="Cpx_auxiliary_protein"/>
</dbReference>
<dbReference type="InterPro" id="IPR012899">
    <property type="entry name" value="LTXXQ"/>
</dbReference>
<dbReference type="NCBIfam" id="NF007687">
    <property type="entry name" value="PRK10363.1"/>
    <property type="match status" value="1"/>
</dbReference>
<dbReference type="PANTHER" id="PTHR38102">
    <property type="entry name" value="PERIPLASMIC CHAPERONE SPY"/>
    <property type="match status" value="1"/>
</dbReference>
<dbReference type="PANTHER" id="PTHR38102:SF2">
    <property type="entry name" value="PERIPLASMIC PROTEIN CPXP"/>
    <property type="match status" value="1"/>
</dbReference>
<dbReference type="Pfam" id="PF07813">
    <property type="entry name" value="LTXXQ"/>
    <property type="match status" value="1"/>
</dbReference>
<dbReference type="PIRSF" id="PIRSF034445">
    <property type="entry name" value="CpxP_Spy"/>
    <property type="match status" value="1"/>
</dbReference>
<organism>
    <name type="scientific">Escherichia coli O6:H1 (strain CFT073 / ATCC 700928 / UPEC)</name>
    <dbReference type="NCBI Taxonomy" id="199310"/>
    <lineage>
        <taxon>Bacteria</taxon>
        <taxon>Pseudomonadati</taxon>
        <taxon>Pseudomonadota</taxon>
        <taxon>Gammaproteobacteria</taxon>
        <taxon>Enterobacterales</taxon>
        <taxon>Enterobacteriaceae</taxon>
        <taxon>Escherichia</taxon>
    </lineage>
</organism>
<keyword id="KW-0574">Periplasm</keyword>
<keyword id="KW-1185">Reference proteome</keyword>
<keyword id="KW-0732">Signal</keyword>
<reference key="1">
    <citation type="journal article" date="2002" name="Proc. Natl. Acad. Sci. U.S.A.">
        <title>Extensive mosaic structure revealed by the complete genome sequence of uropathogenic Escherichia coli.</title>
        <authorList>
            <person name="Welch R.A."/>
            <person name="Burland V."/>
            <person name="Plunkett G. III"/>
            <person name="Redford P."/>
            <person name="Roesch P."/>
            <person name="Rasko D."/>
            <person name="Buckles E.L."/>
            <person name="Liou S.-R."/>
            <person name="Boutin A."/>
            <person name="Hackett J."/>
            <person name="Stroud D."/>
            <person name="Mayhew G.F."/>
            <person name="Rose D.J."/>
            <person name="Zhou S."/>
            <person name="Schwartz D.C."/>
            <person name="Perna N.T."/>
            <person name="Mobley H.L.T."/>
            <person name="Donnenberg M.S."/>
            <person name="Blattner F.R."/>
        </authorList>
    </citation>
    <scope>NUCLEOTIDE SEQUENCE [LARGE SCALE GENOMIC DNA]</scope>
    <source>
        <strain>CFT073 / ATCC 700928 / UPEC</strain>
    </source>
</reference>
<protein>
    <recommendedName>
        <fullName>Periplasmic protein CpxP</fullName>
    </recommendedName>
</protein>
<name>CPXP_ECOL6</name>
<accession>P0AE86</accession>
<accession>O65939</accession>
<accession>P32158</accession>
<comment type="function">
    <text evidence="1">Acts as an accessory protein in the Cpx two-component envelope stress response system. Binds the periplasmic domain of sensor histidine kinase CpxA, inhibiting induction of the envelope stress response in the absence of inducer. Aids in combating extracytoplasmic protein-mediated toxicity.</text>
</comment>
<comment type="subunit">
    <text evidence="1">Homodimer. Interacts with the periplasmic domain of CpxA.</text>
</comment>
<comment type="subcellular location">
    <subcellularLocation>
        <location evidence="1">Periplasm</location>
    </subcellularLocation>
</comment>
<comment type="similarity">
    <text evidence="3">Belongs to the CpxP/Spy family.</text>
</comment>
<comment type="sequence caution" evidence="3">
    <conflict type="erroneous initiation">
        <sequence resource="EMBL-CDS" id="AAN83293"/>
    </conflict>
    <text>Extended N-terminus.</text>
</comment>